<evidence type="ECO:0000250" key="1"/>
<evidence type="ECO:0000250" key="2">
    <source>
        <dbReference type="UniProtKB" id="Q6P1X5"/>
    </source>
</evidence>
<evidence type="ECO:0000256" key="3">
    <source>
        <dbReference type="SAM" id="MobiDB-lite"/>
    </source>
</evidence>
<evidence type="ECO:0000305" key="4"/>
<comment type="function">
    <text evidence="2">The TFIID basal transcription factor complex plays a major role in the initiation of RNA polymerase II (Pol II)-dependent transcription. TFIID recognizes and binds promoters with or without a TATA box via its subunit tbp, a TATA-box-binding protein, and promotes assembly of the pre-initiation complex (PIC). The TFIID complex consists of tbp and TBP-associated factors (TAFs).</text>
</comment>
<comment type="subunit">
    <text evidence="2">Component of the TFIID basal transcription factor complex, composed of TATA-box-binding protein tbp, and a number of TBP-associated factors (TAFs).</text>
</comment>
<comment type="subcellular location">
    <subcellularLocation>
        <location evidence="1">Nucleus</location>
    </subcellularLocation>
</comment>
<comment type="similarity">
    <text evidence="4">Belongs to the TAF2 family.</text>
</comment>
<comment type="sequence caution" evidence="4">
    <conflict type="miscellaneous discrepancy">
        <sequence resource="EMBL-CDS" id="AAH76415"/>
    </conflict>
    <text>Contaminating sequence. Potential poly-A sequence.</text>
</comment>
<comment type="sequence caution" evidence="4">
    <conflict type="miscellaneous discrepancy">
        <sequence resource="EMBL-CDS" id="AAH91664"/>
    </conflict>
    <text>Contaminating sequence. Potential poly-A sequence.</text>
</comment>
<name>TAF2_DANRE</name>
<keyword id="KW-0539">Nucleus</keyword>
<keyword id="KW-1185">Reference proteome</keyword>
<keyword id="KW-0804">Transcription</keyword>
<keyword id="KW-0805">Transcription regulation</keyword>
<feature type="chain" id="PRO_0000252427" description="Transcription initiation factor TFIID subunit 2">
    <location>
        <begin position="1"/>
        <end position="1191"/>
    </location>
</feature>
<feature type="region of interest" description="Disordered" evidence="3">
    <location>
        <begin position="1044"/>
        <end position="1064"/>
    </location>
</feature>
<feature type="region of interest" description="Disordered" evidence="3">
    <location>
        <begin position="1113"/>
        <end position="1191"/>
    </location>
</feature>
<feature type="compositionally biased region" description="Basic residues" evidence="3">
    <location>
        <begin position="1133"/>
        <end position="1162"/>
    </location>
</feature>
<feature type="compositionally biased region" description="Basic and acidic residues" evidence="3">
    <location>
        <begin position="1163"/>
        <end position="1172"/>
    </location>
</feature>
<feature type="compositionally biased region" description="Polar residues" evidence="3">
    <location>
        <begin position="1177"/>
        <end position="1191"/>
    </location>
</feature>
<feature type="sequence conflict" description="In Ref. 2; AAI07958." evidence="4" ref="2">
    <original>F</original>
    <variation>L</variation>
    <location>
        <position position="43"/>
    </location>
</feature>
<feature type="sequence conflict" description="In Ref. 2; AAH76415." evidence="4" ref="2">
    <original>E</original>
    <variation>D</variation>
    <location>
        <position position="393"/>
    </location>
</feature>
<feature type="sequence conflict" description="In Ref. 1; AAT68099." evidence="4" ref="1">
    <original>F</original>
    <variation>L</variation>
    <location>
        <position position="778"/>
    </location>
</feature>
<feature type="sequence conflict" description="In Ref. 1; AAT68099." evidence="4" ref="1">
    <original>S</original>
    <variation>Y</variation>
    <location>
        <position position="1188"/>
    </location>
</feature>
<gene>
    <name type="primary">taf2</name>
</gene>
<accession>Q32PW3</accession>
<accession>Q5BJ13</accession>
<accession>Q6DGD5</accession>
<accession>Q6DRH8</accession>
<dbReference type="EMBL" id="AY648781">
    <property type="protein sequence ID" value="AAT68099.1"/>
    <property type="molecule type" value="mRNA"/>
</dbReference>
<dbReference type="EMBL" id="BC076415">
    <property type="protein sequence ID" value="AAH76415.1"/>
    <property type="status" value="ALT_SEQ"/>
    <property type="molecule type" value="mRNA"/>
</dbReference>
<dbReference type="EMBL" id="BC091664">
    <property type="protein sequence ID" value="AAH91664.1"/>
    <property type="status" value="ALT_SEQ"/>
    <property type="molecule type" value="mRNA"/>
</dbReference>
<dbReference type="EMBL" id="BC107957">
    <property type="protein sequence ID" value="AAI07958.1"/>
    <property type="molecule type" value="mRNA"/>
</dbReference>
<dbReference type="RefSeq" id="NP_001003835.2">
    <property type="nucleotide sequence ID" value="NM_001003835.2"/>
</dbReference>
<dbReference type="SMR" id="Q32PW3"/>
<dbReference type="FunCoup" id="Q32PW3">
    <property type="interactions" value="2441"/>
</dbReference>
<dbReference type="STRING" id="7955.ENSDARP00000139157"/>
<dbReference type="PaxDb" id="7955-ENSDARP00000098846"/>
<dbReference type="Ensembl" id="ENSDART00000165565">
    <property type="protein sequence ID" value="ENSDARP00000139157"/>
    <property type="gene ID" value="ENSDARG00000102307"/>
</dbReference>
<dbReference type="GeneID" id="324486"/>
<dbReference type="KEGG" id="dre:324486"/>
<dbReference type="AGR" id="ZFIN:ZDB-GENE-030131-3207"/>
<dbReference type="CTD" id="6873"/>
<dbReference type="ZFIN" id="ZDB-GENE-030131-3207">
    <property type="gene designation" value="taf2"/>
</dbReference>
<dbReference type="eggNOG" id="KOG1932">
    <property type="taxonomic scope" value="Eukaryota"/>
</dbReference>
<dbReference type="HOGENOM" id="CLU_002317_0_0_1"/>
<dbReference type="InParanoid" id="Q32PW3"/>
<dbReference type="OMA" id="EQPDYQW"/>
<dbReference type="OrthoDB" id="308861at2759"/>
<dbReference type="PhylomeDB" id="Q32PW3"/>
<dbReference type="TreeFam" id="TF315208"/>
<dbReference type="PRO" id="PR:Q32PW3"/>
<dbReference type="Proteomes" id="UP000000437">
    <property type="component" value="Chromosome 16"/>
</dbReference>
<dbReference type="Bgee" id="ENSDARG00000102307">
    <property type="expression patterns" value="Expressed in gastrula and 27 other cell types or tissues"/>
</dbReference>
<dbReference type="GO" id="GO:0005669">
    <property type="term" value="C:transcription factor TFIID complex"/>
    <property type="evidence" value="ECO:0000318"/>
    <property type="project" value="GO_Central"/>
</dbReference>
<dbReference type="GO" id="GO:0003682">
    <property type="term" value="F:chromatin binding"/>
    <property type="evidence" value="ECO:0000318"/>
    <property type="project" value="GO_Central"/>
</dbReference>
<dbReference type="GO" id="GO:0000976">
    <property type="term" value="F:transcription cis-regulatory region binding"/>
    <property type="evidence" value="ECO:0000318"/>
    <property type="project" value="GO_Central"/>
</dbReference>
<dbReference type="GO" id="GO:0006367">
    <property type="term" value="P:transcription initiation at RNA polymerase II promoter"/>
    <property type="evidence" value="ECO:0000318"/>
    <property type="project" value="GO_Central"/>
</dbReference>
<dbReference type="CDD" id="cd09839">
    <property type="entry name" value="M1_like_TAF2"/>
    <property type="match status" value="1"/>
</dbReference>
<dbReference type="FunFam" id="2.60.40.1730:FF:000003">
    <property type="entry name" value="Transcription initiation factor TFIID subunit 2"/>
    <property type="match status" value="1"/>
</dbReference>
<dbReference type="FunFam" id="1.10.390.10:FF:000005">
    <property type="entry name" value="transcription initiation factor TFIID subunit 2 isoform X1"/>
    <property type="match status" value="1"/>
</dbReference>
<dbReference type="Gene3D" id="1.10.390.10">
    <property type="entry name" value="Neutral Protease Domain 2"/>
    <property type="match status" value="1"/>
</dbReference>
<dbReference type="Gene3D" id="2.60.40.1730">
    <property type="entry name" value="tricorn interacting facor f3 domain"/>
    <property type="match status" value="1"/>
</dbReference>
<dbReference type="InterPro" id="IPR042097">
    <property type="entry name" value="Aminopeptidase_N-like_N_sf"/>
</dbReference>
<dbReference type="InterPro" id="IPR016024">
    <property type="entry name" value="ARM-type_fold"/>
</dbReference>
<dbReference type="InterPro" id="IPR027268">
    <property type="entry name" value="Peptidase_M4/M1_CTD_sf"/>
</dbReference>
<dbReference type="InterPro" id="IPR037813">
    <property type="entry name" value="TAF2"/>
</dbReference>
<dbReference type="PANTHER" id="PTHR15137">
    <property type="entry name" value="TRANSCRIPTION INITIATION FACTOR TFIID"/>
    <property type="match status" value="1"/>
</dbReference>
<dbReference type="PANTHER" id="PTHR15137:SF9">
    <property type="entry name" value="TRANSCRIPTION INITIATION FACTOR TFIID SUBUNIT 2"/>
    <property type="match status" value="1"/>
</dbReference>
<dbReference type="Pfam" id="PF25316">
    <property type="entry name" value="TAF2_3rd"/>
    <property type="match status" value="1"/>
</dbReference>
<dbReference type="SUPFAM" id="SSF48371">
    <property type="entry name" value="ARM repeat"/>
    <property type="match status" value="1"/>
</dbReference>
<dbReference type="SUPFAM" id="SSF63737">
    <property type="entry name" value="Leukotriene A4 hydrolase N-terminal domain"/>
    <property type="match status" value="1"/>
</dbReference>
<dbReference type="SUPFAM" id="SSF55486">
    <property type="entry name" value="Metalloproteases ('zincins'), catalytic domain"/>
    <property type="match status" value="1"/>
</dbReference>
<proteinExistence type="evidence at transcript level"/>
<protein>
    <recommendedName>
        <fullName>Transcription initiation factor TFIID subunit 2</fullName>
    </recommendedName>
    <alternativeName>
        <fullName>TBP-associated factor 150 kDa</fullName>
    </alternativeName>
    <alternativeName>
        <fullName>Transcription initiation factor TFIID 150 kDa subunit</fullName>
        <shortName>TAF(II)150</shortName>
        <shortName>TAFII-150</shortName>
        <shortName>TAFII150</shortName>
    </alternativeName>
</protein>
<organism>
    <name type="scientific">Danio rerio</name>
    <name type="common">Zebrafish</name>
    <name type="synonym">Brachydanio rerio</name>
    <dbReference type="NCBI Taxonomy" id="7955"/>
    <lineage>
        <taxon>Eukaryota</taxon>
        <taxon>Metazoa</taxon>
        <taxon>Chordata</taxon>
        <taxon>Craniata</taxon>
        <taxon>Vertebrata</taxon>
        <taxon>Euteleostomi</taxon>
        <taxon>Actinopterygii</taxon>
        <taxon>Neopterygii</taxon>
        <taxon>Teleostei</taxon>
        <taxon>Ostariophysi</taxon>
        <taxon>Cypriniformes</taxon>
        <taxon>Danionidae</taxon>
        <taxon>Danioninae</taxon>
        <taxon>Danio</taxon>
    </lineage>
</organism>
<sequence>MNRKKDKGFESPRPYKLTHQVVCINNVNFQRKSVIGYVELTIFPTVVNLNRIKLNSKQCRIYRVRVNDLEAPFIYNDPTLEVCHHESKQRNLNYFSSAYTAAVSAVDPDAGNGELSIKVPSELWKQGDEMKVMKVYIEFSLDQPKGGLHFVVPDVEGNMAERAAHVFSFGNQNSSRFWFPCVDSYSELCTWKLEFTVDASMVAVSCGDLVETVYTHDMRKKTYHYMLPIPTAAPNISMAVGPFEILVDPYMHEVTHFCLPQLLPLLKHTMSYLHEIFEFYEEILTCRYPYSCFKTVFVDEAYVQVSSYASMSIFSTNLLHSGLIIDQTPMTRSFLAQALAQQFFGCFISRMSWADEWVLKGISGYIYGLYLKKTFGVNEYRHWIKEELDKIVEYELKIGGVLLHPTFSGGKEKDNPTPHLHFSIKHPHTLSWEYYKMFQCKAHLVMRLIENRISMEFMLQVFNKLLSLASTASSQKYQSHMWSQMLVSTSGFLKSISNVSGKDIGPLIKQWVDQSGVVKFFGSFAFNRKRNVLELEIRQDYTSSGTQKYVGPIKVTVQELDGSFNHTLQIEENSLKHDIPCHSKSRRNKKKKIPLMNGEEVDMDLSAMDADSPLLWIRIDPDMSILRKVEFEQADFMWQYQLRYERDVVAQEEAILALEKFPTPPSRRALTDILEQDQCFYKVRMHACFCLAKIANSMVSTWTGPPAMKSLFTRMFCCKSCPNIVKTNNFISFQSYFLQKTIPVAMAQLRDVQNLCPREVLSFILDLIKYNDNRKNKFSDNYYRAELIDALTNSLTPAISINNEVRTVDSLNADVRLILEEITRFLNMEKLLPSYRNTITVSCLRAIRMLQKNGHIPSDPTLFKSYAEYGHFVDVRIAALEAVIDYTRVDRSSSELQWLLDLVQNDPVHYVRHEILSMLAKNPPFTKAADSSLCNEALVDQLWKLMNSGTCHDWRLRCDAVNLYYTLFGLTRPSCLPLPELGLVLNLKEKKAVLNPTIKSEQIPGLPEMTPSMTFINTLKEEHVVMDPALSGVAMAPLSLKRKAETPVGSAPEPGQVLQEEPSAKITLKSREEEDIDMDTVHDSQAFIYHHLNMLERPSTPGKEPSSVEQAILSMPGTPMPTLSKESTSSKHGEHHHHHHHHHEHKKKKKKHKHKHKHKHKHESKDKDRDSHAFVNSPASGLSIRSPSLSD</sequence>
<reference key="1">
    <citation type="journal article" date="2004" name="Proc. Natl. Acad. Sci. U.S.A.">
        <title>Identification of 315 genes essential for early zebrafish development.</title>
        <authorList>
            <person name="Amsterdam A."/>
            <person name="Nissen R.M."/>
            <person name="Sun Z."/>
            <person name="Swindell E.C."/>
            <person name="Farrington S."/>
            <person name="Hopkins N."/>
        </authorList>
    </citation>
    <scope>NUCLEOTIDE SEQUENCE [LARGE SCALE MRNA]</scope>
    <source>
        <tissue>Embryo</tissue>
    </source>
</reference>
<reference key="2">
    <citation type="submission" date="2005-10" db="EMBL/GenBank/DDBJ databases">
        <authorList>
            <consortium name="NIH - Zebrafish Gene Collection (ZGC) project"/>
        </authorList>
    </citation>
    <scope>NUCLEOTIDE SEQUENCE [LARGE SCALE MRNA]</scope>
    <source>
        <strain>SJD</strain>
        <tissue>Embryo</tissue>
    </source>
</reference>